<keyword id="KW-0227">DNA damage</keyword>
<keyword id="KW-0234">DNA repair</keyword>
<keyword id="KW-0238">DNA-binding</keyword>
<keyword id="KW-0326">Glycosidase</keyword>
<keyword id="KW-0378">Hydrolase</keyword>
<keyword id="KW-0456">Lyase</keyword>
<keyword id="KW-0479">Metal-binding</keyword>
<keyword id="KW-0511">Multifunctional enzyme</keyword>
<keyword id="KW-1185">Reference proteome</keyword>
<keyword id="KW-0862">Zinc</keyword>
<keyword id="KW-0863">Zinc-finger</keyword>
<reference key="1">
    <citation type="submission" date="2007-10" db="EMBL/GenBank/DDBJ databases">
        <title>Complete sequence of Shewanella pealeana ATCC 700345.</title>
        <authorList>
            <consortium name="US DOE Joint Genome Institute"/>
            <person name="Copeland A."/>
            <person name="Lucas S."/>
            <person name="Lapidus A."/>
            <person name="Barry K."/>
            <person name="Glavina del Rio T."/>
            <person name="Dalin E."/>
            <person name="Tice H."/>
            <person name="Pitluck S."/>
            <person name="Chertkov O."/>
            <person name="Brettin T."/>
            <person name="Bruce D."/>
            <person name="Detter J.C."/>
            <person name="Han C."/>
            <person name="Schmutz J."/>
            <person name="Larimer F."/>
            <person name="Land M."/>
            <person name="Hauser L."/>
            <person name="Kyrpides N."/>
            <person name="Kim E."/>
            <person name="Zhao J.-S.Z."/>
            <person name="Manno D."/>
            <person name="Hawari J."/>
            <person name="Richardson P."/>
        </authorList>
    </citation>
    <scope>NUCLEOTIDE SEQUENCE [LARGE SCALE GENOMIC DNA]</scope>
    <source>
        <strain>ATCC 700345 / ANG-SQ1</strain>
    </source>
</reference>
<protein>
    <recommendedName>
        <fullName evidence="2">Formamidopyrimidine-DNA glycosylase</fullName>
        <shortName evidence="2">Fapy-DNA glycosylase</shortName>
        <ecNumber evidence="2">3.2.2.23</ecNumber>
    </recommendedName>
    <alternativeName>
        <fullName evidence="2">DNA-(apurinic or apyrimidinic site) lyase MutM</fullName>
        <shortName evidence="2">AP lyase MutM</shortName>
        <ecNumber evidence="2">4.2.99.18</ecNumber>
    </alternativeName>
</protein>
<comment type="function">
    <text evidence="2">Involved in base excision repair of DNA damaged by oxidation or by mutagenic agents. Acts as a DNA glycosylase that recognizes and removes damaged bases. Has a preference for oxidized purines, such as 7,8-dihydro-8-oxoguanine (8-oxoG). Has AP (apurinic/apyrimidinic) lyase activity and introduces nicks in the DNA strand. Cleaves the DNA backbone by beta-delta elimination to generate a single-strand break at the site of the removed base with both 3'- and 5'-phosphates.</text>
</comment>
<comment type="catalytic activity">
    <reaction evidence="2">
        <text>Hydrolysis of DNA containing ring-opened 7-methylguanine residues, releasing 2,6-diamino-4-hydroxy-5-(N-methyl)formamidopyrimidine.</text>
        <dbReference type="EC" id="3.2.2.23"/>
    </reaction>
</comment>
<comment type="catalytic activity">
    <reaction evidence="2">
        <text>2'-deoxyribonucleotide-(2'-deoxyribose 5'-phosphate)-2'-deoxyribonucleotide-DNA = a 3'-end 2'-deoxyribonucleotide-(2,3-dehydro-2,3-deoxyribose 5'-phosphate)-DNA + a 5'-end 5'-phospho-2'-deoxyribonucleoside-DNA + H(+)</text>
        <dbReference type="Rhea" id="RHEA:66592"/>
        <dbReference type="Rhea" id="RHEA-COMP:13180"/>
        <dbReference type="Rhea" id="RHEA-COMP:16897"/>
        <dbReference type="Rhea" id="RHEA-COMP:17067"/>
        <dbReference type="ChEBI" id="CHEBI:15378"/>
        <dbReference type="ChEBI" id="CHEBI:136412"/>
        <dbReference type="ChEBI" id="CHEBI:157695"/>
        <dbReference type="ChEBI" id="CHEBI:167181"/>
        <dbReference type="EC" id="4.2.99.18"/>
    </reaction>
</comment>
<comment type="cofactor">
    <cofactor evidence="2">
        <name>Zn(2+)</name>
        <dbReference type="ChEBI" id="CHEBI:29105"/>
    </cofactor>
    <text evidence="2">Binds 1 zinc ion per subunit.</text>
</comment>
<comment type="subunit">
    <text evidence="2">Monomer.</text>
</comment>
<comment type="similarity">
    <text evidence="2">Belongs to the FPG family.</text>
</comment>
<dbReference type="EC" id="3.2.2.23" evidence="2"/>
<dbReference type="EC" id="4.2.99.18" evidence="2"/>
<dbReference type="EMBL" id="CP000851">
    <property type="protein sequence ID" value="ABV89414.1"/>
    <property type="molecule type" value="Genomic_DNA"/>
</dbReference>
<dbReference type="RefSeq" id="WP_012157292.1">
    <property type="nucleotide sequence ID" value="NC_009901.1"/>
</dbReference>
<dbReference type="SMR" id="A8HA27"/>
<dbReference type="STRING" id="398579.Spea_4104"/>
<dbReference type="KEGG" id="spl:Spea_4104"/>
<dbReference type="eggNOG" id="COG0266">
    <property type="taxonomic scope" value="Bacteria"/>
</dbReference>
<dbReference type="HOGENOM" id="CLU_038423_1_1_6"/>
<dbReference type="OrthoDB" id="9800855at2"/>
<dbReference type="Proteomes" id="UP000002608">
    <property type="component" value="Chromosome"/>
</dbReference>
<dbReference type="GO" id="GO:0034039">
    <property type="term" value="F:8-oxo-7,8-dihydroguanine DNA N-glycosylase activity"/>
    <property type="evidence" value="ECO:0007669"/>
    <property type="project" value="TreeGrafter"/>
</dbReference>
<dbReference type="GO" id="GO:0140078">
    <property type="term" value="F:class I DNA-(apurinic or apyrimidinic site) endonuclease activity"/>
    <property type="evidence" value="ECO:0007669"/>
    <property type="project" value="UniProtKB-EC"/>
</dbReference>
<dbReference type="GO" id="GO:0003684">
    <property type="term" value="F:damaged DNA binding"/>
    <property type="evidence" value="ECO:0007669"/>
    <property type="project" value="InterPro"/>
</dbReference>
<dbReference type="GO" id="GO:0008270">
    <property type="term" value="F:zinc ion binding"/>
    <property type="evidence" value="ECO:0007669"/>
    <property type="project" value="UniProtKB-UniRule"/>
</dbReference>
<dbReference type="GO" id="GO:0006284">
    <property type="term" value="P:base-excision repair"/>
    <property type="evidence" value="ECO:0007669"/>
    <property type="project" value="InterPro"/>
</dbReference>
<dbReference type="CDD" id="cd08966">
    <property type="entry name" value="EcFpg-like_N"/>
    <property type="match status" value="1"/>
</dbReference>
<dbReference type="FunFam" id="1.10.8.50:FF:000003">
    <property type="entry name" value="Formamidopyrimidine-DNA glycosylase"/>
    <property type="match status" value="1"/>
</dbReference>
<dbReference type="FunFam" id="3.20.190.10:FF:000001">
    <property type="entry name" value="Formamidopyrimidine-DNA glycosylase"/>
    <property type="match status" value="1"/>
</dbReference>
<dbReference type="Gene3D" id="1.10.8.50">
    <property type="match status" value="1"/>
</dbReference>
<dbReference type="Gene3D" id="3.20.190.10">
    <property type="entry name" value="MutM-like, N-terminal"/>
    <property type="match status" value="1"/>
</dbReference>
<dbReference type="HAMAP" id="MF_00103">
    <property type="entry name" value="Fapy_DNA_glycosyl"/>
    <property type="match status" value="1"/>
</dbReference>
<dbReference type="InterPro" id="IPR015886">
    <property type="entry name" value="DNA_glyclase/AP_lyase_DNA-bd"/>
</dbReference>
<dbReference type="InterPro" id="IPR015887">
    <property type="entry name" value="DNA_glyclase_Znf_dom_DNA_BS"/>
</dbReference>
<dbReference type="InterPro" id="IPR020629">
    <property type="entry name" value="Formamido-pyr_DNA_Glyclase"/>
</dbReference>
<dbReference type="InterPro" id="IPR012319">
    <property type="entry name" value="FPG_cat"/>
</dbReference>
<dbReference type="InterPro" id="IPR035937">
    <property type="entry name" value="MutM-like_N-ter"/>
</dbReference>
<dbReference type="InterPro" id="IPR010979">
    <property type="entry name" value="Ribosomal_uS13-like_H2TH"/>
</dbReference>
<dbReference type="InterPro" id="IPR000214">
    <property type="entry name" value="Znf_DNA_glyclase/AP_lyase"/>
</dbReference>
<dbReference type="InterPro" id="IPR010663">
    <property type="entry name" value="Znf_FPG/IleRS"/>
</dbReference>
<dbReference type="NCBIfam" id="TIGR00577">
    <property type="entry name" value="fpg"/>
    <property type="match status" value="1"/>
</dbReference>
<dbReference type="NCBIfam" id="NF002211">
    <property type="entry name" value="PRK01103.1"/>
    <property type="match status" value="1"/>
</dbReference>
<dbReference type="PANTHER" id="PTHR22993">
    <property type="entry name" value="FORMAMIDOPYRIMIDINE-DNA GLYCOSYLASE"/>
    <property type="match status" value="1"/>
</dbReference>
<dbReference type="PANTHER" id="PTHR22993:SF9">
    <property type="entry name" value="FORMAMIDOPYRIMIDINE-DNA GLYCOSYLASE"/>
    <property type="match status" value="1"/>
</dbReference>
<dbReference type="Pfam" id="PF01149">
    <property type="entry name" value="Fapy_DNA_glyco"/>
    <property type="match status" value="1"/>
</dbReference>
<dbReference type="Pfam" id="PF06831">
    <property type="entry name" value="H2TH"/>
    <property type="match status" value="1"/>
</dbReference>
<dbReference type="Pfam" id="PF06827">
    <property type="entry name" value="zf-FPG_IleRS"/>
    <property type="match status" value="1"/>
</dbReference>
<dbReference type="SMART" id="SM00898">
    <property type="entry name" value="Fapy_DNA_glyco"/>
    <property type="match status" value="1"/>
</dbReference>
<dbReference type="SMART" id="SM01232">
    <property type="entry name" value="H2TH"/>
    <property type="match status" value="1"/>
</dbReference>
<dbReference type="SUPFAM" id="SSF57716">
    <property type="entry name" value="Glucocorticoid receptor-like (DNA-binding domain)"/>
    <property type="match status" value="1"/>
</dbReference>
<dbReference type="SUPFAM" id="SSF81624">
    <property type="entry name" value="N-terminal domain of MutM-like DNA repair proteins"/>
    <property type="match status" value="1"/>
</dbReference>
<dbReference type="SUPFAM" id="SSF46946">
    <property type="entry name" value="S13-like H2TH domain"/>
    <property type="match status" value="1"/>
</dbReference>
<dbReference type="PROSITE" id="PS51068">
    <property type="entry name" value="FPG_CAT"/>
    <property type="match status" value="1"/>
</dbReference>
<dbReference type="PROSITE" id="PS01242">
    <property type="entry name" value="ZF_FPG_1"/>
    <property type="match status" value="1"/>
</dbReference>
<dbReference type="PROSITE" id="PS51066">
    <property type="entry name" value="ZF_FPG_2"/>
    <property type="match status" value="1"/>
</dbReference>
<sequence>MPELPEVEVTRQGVSPYLIDNTVTDLIVRNPSLRWPVPEIAKQIIGQTIRNVRRRAKYLLIDTDAGTTIVHLGMSGSLRILPATTPAEKHDHIDLVLASGKALRFNDPRRFGAWLWCELPEQAHPLLSKLGPEPLTDAFNAPYLLESLANKKKAIKLCLMDNHIVVGVGNIYANEALFAAGIHPQAEAGKVDAERIEILVSEVKQILAGAIKQGGTTLKDFTNADGKPGYFAQKLHVYGRGGKTCTQCGHMLSEIKLGQRATVFCSLCQQR</sequence>
<evidence type="ECO:0000250" key="1"/>
<evidence type="ECO:0000255" key="2">
    <source>
        <dbReference type="HAMAP-Rule" id="MF_00103"/>
    </source>
</evidence>
<feature type="initiator methionine" description="Removed" evidence="1">
    <location>
        <position position="1"/>
    </location>
</feature>
<feature type="chain" id="PRO_1000075714" description="Formamidopyrimidine-DNA glycosylase">
    <location>
        <begin position="2"/>
        <end position="271"/>
    </location>
</feature>
<feature type="zinc finger region" description="FPG-type" evidence="2">
    <location>
        <begin position="236"/>
        <end position="270"/>
    </location>
</feature>
<feature type="active site" description="Schiff-base intermediate with DNA" evidence="2">
    <location>
        <position position="2"/>
    </location>
</feature>
<feature type="active site" description="Proton donor" evidence="2">
    <location>
        <position position="3"/>
    </location>
</feature>
<feature type="active site" description="Proton donor; for beta-elimination activity" evidence="2">
    <location>
        <position position="57"/>
    </location>
</feature>
<feature type="active site" description="Proton donor; for delta-elimination activity" evidence="2">
    <location>
        <position position="260"/>
    </location>
</feature>
<feature type="binding site" evidence="2">
    <location>
        <position position="90"/>
    </location>
    <ligand>
        <name>DNA</name>
        <dbReference type="ChEBI" id="CHEBI:16991"/>
    </ligand>
</feature>
<feature type="binding site" evidence="2">
    <location>
        <position position="109"/>
    </location>
    <ligand>
        <name>DNA</name>
        <dbReference type="ChEBI" id="CHEBI:16991"/>
    </ligand>
</feature>
<feature type="binding site" evidence="2">
    <location>
        <position position="151"/>
    </location>
    <ligand>
        <name>DNA</name>
        <dbReference type="ChEBI" id="CHEBI:16991"/>
    </ligand>
</feature>
<name>FPG_SHEPA</name>
<proteinExistence type="inferred from homology"/>
<organism>
    <name type="scientific">Shewanella pealeana (strain ATCC 700345 / ANG-SQ1)</name>
    <dbReference type="NCBI Taxonomy" id="398579"/>
    <lineage>
        <taxon>Bacteria</taxon>
        <taxon>Pseudomonadati</taxon>
        <taxon>Pseudomonadota</taxon>
        <taxon>Gammaproteobacteria</taxon>
        <taxon>Alteromonadales</taxon>
        <taxon>Shewanellaceae</taxon>
        <taxon>Shewanella</taxon>
    </lineage>
</organism>
<gene>
    <name evidence="2" type="primary">mutM</name>
    <name evidence="2" type="synonym">fpg</name>
    <name type="ordered locus">Spea_4104</name>
</gene>
<accession>A8HA27</accession>